<name>CR1CA_BACTA</name>
<evidence type="ECO:0000305" key="1"/>
<sequence length="1189" mass="134786">MEENNQNQCIPYNCLSNPEEVLLDGERISTGNSSIDISLSLVQFLVSNFVPGGGFLVGLIDFVWGIVGPSQWDAFLVQIEQLINERIAEFARNAAIANLEGLGNNFNIYVEAFKEWEEDPNNPATRTRVIDRFRILDGLLERDIPSFRISGFEVPLLSVYAQAANLHLAILRDSVIFGERWGLTTINVNENYNRLIRHIDEYADHCANTYNRGLNNLPKSTYQDWITYNRLRRDLTLTVLDIAAFFPNYDNRRYPIQPVGQLTREVYTDPLINFNPQLQSVAQLPTFNVMESSAIRNPHLFDILNNLTIFTDWFSVGRNFYWGGHRVISSLIGGGNITSPIYGREANQEPPRSFTFNGPVFRTLSNPTLRLLQQPWPAPPFNLRGVEGVEFSTPTNSFTYRGRGTVDSLTELPPEDNSVPPREGYSHRLCHATFVQRSGTPFLTTGVVFSWTHRSATLTNTIDPERINQIPLVKGFRVWGGTSVITGPGFTGGDILRRNTFGDFVSLQVNINSPITQRYRLRFRYASSRDARVIVLTGAASTGVGGQVSVNMPLQKTMEIGENLTSRTFRYTDFSNPFSFRANPDIIGISEQPLFGAGSISSGELYIDKIEIILADATFEAESDLERAQKAVNALFTSSNQIGLKTDVTDYHIDQVSNLVDCLSDEFCLDEKRELSEKVKHAKRLSDERNLLQDPNFRGINRQPDRGWRGSTDITIQGGDDVFKENYVTLPGTVDECYPTYLYQKIDESKLKAYTRYELRGYIEDSQDLEIYLIRYNAKHEIVNVPGTGSLWPLSAQSPIGKCGEPNRCAPHLEWNPDLDCSCRDGEKCAHHSHHFTLDIDVGCTDLNEDLGLWVIFKIKTQDNHARLGNLEFLEEKPLLGEALARVKRAEKKWRDKREKLQLETNIVYKEAKESVDALFVNSQYDRLQVNTNIAMIHAADKRVHRIREAYLPELSVIPGVNAAIFEELEGRIFTAYSLYDARNVIKNGDFNNGLLCWNVKGHVDVEEQNNHRSVLVIPEWEAEVSQEVRVCPGRGYILRVTAYKEGYGEGCVTIHEIEDNTDELKFSNCVEEEVYPNNTVTCNNYTGTQEEYEGTYTSRNQGYDEAYGNNPSVPADYASVYEEKSYTDGRRENPCESNRGYGDYTPLPAGYVTKDLEYFPETDKVWIEIGETEGTFIVDSVELLLMEE</sequence>
<gene>
    <name type="primary">cry1Ca</name>
    <name type="synonym">cryIC</name>
    <name type="synonym">cryIC(a)</name>
</gene>
<dbReference type="EMBL" id="M73251">
    <property type="protein sequence ID" value="AAA22343.1"/>
    <property type="molecule type" value="Genomic_DNA"/>
</dbReference>
<dbReference type="EMBL" id="X13620">
    <property type="protein sequence ID" value="CAA31951.1"/>
    <property type="molecule type" value="Genomic_DNA"/>
</dbReference>
<dbReference type="EMBL" id="X96682">
    <property type="protein sequence ID" value="CAA65457.1"/>
    <property type="molecule type" value="Genomic_DNA"/>
</dbReference>
<dbReference type="PIR" id="S04181">
    <property type="entry name" value="S04181"/>
</dbReference>
<dbReference type="SMR" id="P0A376"/>
<dbReference type="GO" id="GO:0005102">
    <property type="term" value="F:signaling receptor binding"/>
    <property type="evidence" value="ECO:0007669"/>
    <property type="project" value="InterPro"/>
</dbReference>
<dbReference type="GO" id="GO:0090729">
    <property type="term" value="F:toxin activity"/>
    <property type="evidence" value="ECO:0007669"/>
    <property type="project" value="UniProtKB-KW"/>
</dbReference>
<dbReference type="GO" id="GO:0030435">
    <property type="term" value="P:sporulation resulting in formation of a cellular spore"/>
    <property type="evidence" value="ECO:0007669"/>
    <property type="project" value="UniProtKB-KW"/>
</dbReference>
<dbReference type="GO" id="GO:0001907">
    <property type="term" value="P:symbiont-mediated killing of host cell"/>
    <property type="evidence" value="ECO:0007669"/>
    <property type="project" value="InterPro"/>
</dbReference>
<dbReference type="CDD" id="cd04085">
    <property type="entry name" value="delta_endotoxin_C"/>
    <property type="match status" value="1"/>
</dbReference>
<dbReference type="Gene3D" id="2.60.120.260">
    <property type="entry name" value="Galactose-binding domain-like"/>
    <property type="match status" value="2"/>
</dbReference>
<dbReference type="Gene3D" id="2.100.10.10">
    <property type="entry name" value="Pesticidal crystal protein, central domain"/>
    <property type="match status" value="1"/>
</dbReference>
<dbReference type="Gene3D" id="1.20.190.10">
    <property type="entry name" value="Pesticidal crystal protein, N-terminal domain"/>
    <property type="match status" value="1"/>
</dbReference>
<dbReference type="InterPro" id="IPR048645">
    <property type="entry name" value="Cry1Ac-like_dom-VII"/>
</dbReference>
<dbReference type="InterPro" id="IPR041587">
    <property type="entry name" value="Cry_V"/>
</dbReference>
<dbReference type="InterPro" id="IPR008979">
    <property type="entry name" value="Galactose-bd-like_sf"/>
</dbReference>
<dbReference type="InterPro" id="IPR038979">
    <property type="entry name" value="Pest_crys"/>
</dbReference>
<dbReference type="InterPro" id="IPR054544">
    <property type="entry name" value="Pest_crys_Cry1Aa_dom-IV"/>
</dbReference>
<dbReference type="InterPro" id="IPR005638">
    <property type="entry name" value="Pest_crys_dom-III"/>
</dbReference>
<dbReference type="InterPro" id="IPR005639">
    <property type="entry name" value="Pest_crys_dom_I"/>
</dbReference>
<dbReference type="InterPro" id="IPR036716">
    <property type="entry name" value="Pest_crys_N_sf"/>
</dbReference>
<dbReference type="InterPro" id="IPR036399">
    <property type="entry name" value="Pest_cryst_cen_dom_sf"/>
</dbReference>
<dbReference type="InterPro" id="IPR001178">
    <property type="entry name" value="Pest_cryst_dom_II"/>
</dbReference>
<dbReference type="PANTHER" id="PTHR37003">
    <property type="entry name" value="ENDOTOXIN_N DOMAIN-CONTAINING PROTEIN-RELATED"/>
    <property type="match status" value="1"/>
</dbReference>
<dbReference type="PANTHER" id="PTHR37003:SF2">
    <property type="entry name" value="PESTICIDAL CRYSTAL PROTEIN N-TERMINAL DOMAIN-CONTAINING PROTEIN"/>
    <property type="match status" value="1"/>
</dbReference>
<dbReference type="Pfam" id="PF17997">
    <property type="entry name" value="Cry1Ac_D5"/>
    <property type="match status" value="1"/>
</dbReference>
<dbReference type="Pfam" id="PF21463">
    <property type="entry name" value="Cry1Ac_dom-VII"/>
    <property type="match status" value="1"/>
</dbReference>
<dbReference type="Pfam" id="PF03944">
    <property type="entry name" value="Endotoxin_C"/>
    <property type="match status" value="1"/>
</dbReference>
<dbReference type="Pfam" id="PF18449">
    <property type="entry name" value="Endotoxin_C2"/>
    <property type="match status" value="1"/>
</dbReference>
<dbReference type="Pfam" id="PF00555">
    <property type="entry name" value="Endotoxin_M"/>
    <property type="match status" value="1"/>
</dbReference>
<dbReference type="Pfam" id="PF03945">
    <property type="entry name" value="Endotoxin_N"/>
    <property type="match status" value="1"/>
</dbReference>
<dbReference type="SUPFAM" id="SSF51096">
    <property type="entry name" value="delta-Endotoxin (insectocide), middle domain"/>
    <property type="match status" value="1"/>
</dbReference>
<dbReference type="SUPFAM" id="SSF56849">
    <property type="entry name" value="delta-Endotoxin (insectocide), N-terminal domain"/>
    <property type="match status" value="1"/>
</dbReference>
<dbReference type="SUPFAM" id="SSF49785">
    <property type="entry name" value="Galactose-binding domain-like"/>
    <property type="match status" value="1"/>
</dbReference>
<keyword id="KW-0749">Sporulation</keyword>
<keyword id="KW-0800">Toxin</keyword>
<keyword id="KW-0843">Virulence</keyword>
<reference key="1">
    <citation type="patent" date="1993-09-21" number="US5246852">
        <title>Bacillus thuringiensis isolate active against lepidopteran pests, and genes encoding novel lepidopteran-active toxins.</title>
        <authorList>
            <person name="Payne J.M."/>
            <person name="Sick A.J."/>
        </authorList>
    </citation>
    <scope>NUCLEOTIDE SEQUENCE [GENOMIC DNA]</scope>
    <source>
        <strain>NRRL B-18484 / PS81I</strain>
    </source>
</reference>
<reference key="2">
    <citation type="journal article" date="1989" name="Mol. Microbiol.">
        <title>Nucleotide sequence and analysis of the N-terminal coding region of the Spodoptera-active delta-endotoxin gene of Bacillus thuringiensis aizawai 7.29.</title>
        <authorList>
            <person name="Sanchis V."/>
            <person name="Lerechus D."/>
            <person name="Menou M."/>
            <person name="Chaufaux J."/>
            <person name="Guo S."/>
            <person name="Lecadet M.-M."/>
        </authorList>
    </citation>
    <scope>NUCLEOTIDE SEQUENCE [GENOMIC DNA] OF 1-823</scope>
    <source>
        <strain>7-29</strain>
    </source>
</reference>
<reference key="3">
    <citation type="submission" date="1996-03" db="EMBL/GenBank/DDBJ databases">
        <authorList>
            <person name="Strizhov N."/>
        </authorList>
    </citation>
    <scope>NUCLEOTIDE SEQUENCE [GENOMIC DNA] OF 1-756</scope>
    <source>
        <strain>7-29 / K26-21</strain>
    </source>
</reference>
<feature type="chain" id="PRO_0000174035" description="Pesticidal crystal protein Cry1Ca">
    <location>
        <begin position="1"/>
        <end position="1189"/>
    </location>
</feature>
<feature type="sequence conflict" description="In Ref. 2; CAA31951." evidence="1" ref="2">
    <original>N</original>
    <variation>I</variation>
    <location>
        <position position="366"/>
    </location>
</feature>
<feature type="sequence conflict" description="In Ref. 2; CAA31951." evidence="1" ref="2">
    <original>WPAPP</original>
    <variation>CQRHH</variation>
    <location>
        <begin position="376"/>
        <end position="380"/>
    </location>
</feature>
<feature type="sequence conflict" description="In Ref. 2; CAA31951." evidence="1" ref="2">
    <original>V</original>
    <variation>G</variation>
    <location>
        <position position="386"/>
    </location>
</feature>
<feature type="sequence conflict" description="In Ref. 1; AAA22343." evidence="1" ref="1">
    <original>T</original>
    <variation>Q</variation>
    <location>
        <position position="405"/>
    </location>
</feature>
<feature type="sequence conflict" description="In Ref. 2; CAA31951." evidence="1" ref="2">
    <original>R</original>
    <variation>A</variation>
    <location>
        <position position="775"/>
    </location>
</feature>
<proteinExistence type="evidence at transcript level"/>
<comment type="function">
    <text>Promotes colloidosmotic lysis by binding to the midgut epithelial cells of many lepidopteran larvae including Spodoptera species.</text>
</comment>
<comment type="developmental stage">
    <text>The crystal protein is produced during sporulation and is accumulated both as an inclusion and as part of the spore coat.</text>
</comment>
<comment type="miscellaneous">
    <text>Toxic segment of the protein is located in the N-terminus.</text>
</comment>
<comment type="similarity">
    <text evidence="1">Belongs to the delta endotoxin family.</text>
</comment>
<accession>P0A376</accession>
<accession>P05518</accession>
<accession>P10327</accession>
<accession>Q03742</accession>
<accession>Q45725</accession>
<protein>
    <recommendedName>
        <fullName>Pesticidal crystal protein Cry1Ca</fullName>
    </recommendedName>
    <alternativeName>
        <fullName>134 kDa crystal protein</fullName>
    </alternativeName>
    <alternativeName>
        <fullName>Crystaline entomocidal protoxin</fullName>
    </alternativeName>
    <alternativeName>
        <fullName>Insecticidal delta-endotoxin CryIC(a)</fullName>
    </alternativeName>
</protein>
<organism>
    <name type="scientific">Bacillus thuringiensis subsp. aizawai</name>
    <dbReference type="NCBI Taxonomy" id="1433"/>
    <lineage>
        <taxon>Bacteria</taxon>
        <taxon>Bacillati</taxon>
        <taxon>Bacillota</taxon>
        <taxon>Bacilli</taxon>
        <taxon>Bacillales</taxon>
        <taxon>Bacillaceae</taxon>
        <taxon>Bacillus</taxon>
        <taxon>Bacillus cereus group</taxon>
    </lineage>
</organism>